<gene>
    <name evidence="1" type="primary">rpmC</name>
    <name type="ordered locus">Rpal_3659</name>
</gene>
<organism>
    <name type="scientific">Rhodopseudomonas palustris (strain TIE-1)</name>
    <dbReference type="NCBI Taxonomy" id="395960"/>
    <lineage>
        <taxon>Bacteria</taxon>
        <taxon>Pseudomonadati</taxon>
        <taxon>Pseudomonadota</taxon>
        <taxon>Alphaproteobacteria</taxon>
        <taxon>Hyphomicrobiales</taxon>
        <taxon>Nitrobacteraceae</taxon>
        <taxon>Rhodopseudomonas</taxon>
    </lineage>
</organism>
<protein>
    <recommendedName>
        <fullName evidence="1">Large ribosomal subunit protein uL29</fullName>
    </recommendedName>
    <alternativeName>
        <fullName evidence="2">50S ribosomal protein L29</fullName>
    </alternativeName>
</protein>
<accession>B3QBX2</accession>
<reference key="1">
    <citation type="submission" date="2008-05" db="EMBL/GenBank/DDBJ databases">
        <title>Complete sequence of Rhodopseudomonas palustris TIE-1.</title>
        <authorList>
            <consortium name="US DOE Joint Genome Institute"/>
            <person name="Lucas S."/>
            <person name="Copeland A."/>
            <person name="Lapidus A."/>
            <person name="Glavina del Rio T."/>
            <person name="Dalin E."/>
            <person name="Tice H."/>
            <person name="Pitluck S."/>
            <person name="Chain P."/>
            <person name="Malfatti S."/>
            <person name="Shin M."/>
            <person name="Vergez L."/>
            <person name="Lang D."/>
            <person name="Schmutz J."/>
            <person name="Larimer F."/>
            <person name="Land M."/>
            <person name="Hauser L."/>
            <person name="Kyrpides N."/>
            <person name="Mikhailova N."/>
            <person name="Emerson D."/>
            <person name="Newman D.K."/>
            <person name="Roden E."/>
            <person name="Richardson P."/>
        </authorList>
    </citation>
    <scope>NUCLEOTIDE SEQUENCE [LARGE SCALE GENOMIC DNA]</scope>
    <source>
        <strain>TIE-1</strain>
    </source>
</reference>
<keyword id="KW-0687">Ribonucleoprotein</keyword>
<keyword id="KW-0689">Ribosomal protein</keyword>
<sequence length="69" mass="7981">MAEMKTADIRAMSEDQMDDAILSLKKERFNLRFQRATGQLENTSRLREARRDIARIKTIAAQKRAGKTK</sequence>
<proteinExistence type="inferred from homology"/>
<comment type="similarity">
    <text evidence="1">Belongs to the universal ribosomal protein uL29 family.</text>
</comment>
<feature type="chain" id="PRO_1000121807" description="Large ribosomal subunit protein uL29">
    <location>
        <begin position="1"/>
        <end position="69"/>
    </location>
</feature>
<dbReference type="EMBL" id="CP001096">
    <property type="protein sequence ID" value="ACF02159.1"/>
    <property type="molecule type" value="Genomic_DNA"/>
</dbReference>
<dbReference type="RefSeq" id="WP_011158787.1">
    <property type="nucleotide sequence ID" value="NC_011004.1"/>
</dbReference>
<dbReference type="SMR" id="B3QBX2"/>
<dbReference type="GeneID" id="66894328"/>
<dbReference type="KEGG" id="rpt:Rpal_3659"/>
<dbReference type="HOGENOM" id="CLU_158491_1_0_5"/>
<dbReference type="OrthoDB" id="9815192at2"/>
<dbReference type="Proteomes" id="UP000001725">
    <property type="component" value="Chromosome"/>
</dbReference>
<dbReference type="GO" id="GO:0022625">
    <property type="term" value="C:cytosolic large ribosomal subunit"/>
    <property type="evidence" value="ECO:0007669"/>
    <property type="project" value="TreeGrafter"/>
</dbReference>
<dbReference type="GO" id="GO:0003735">
    <property type="term" value="F:structural constituent of ribosome"/>
    <property type="evidence" value="ECO:0007669"/>
    <property type="project" value="InterPro"/>
</dbReference>
<dbReference type="GO" id="GO:0006412">
    <property type="term" value="P:translation"/>
    <property type="evidence" value="ECO:0007669"/>
    <property type="project" value="UniProtKB-UniRule"/>
</dbReference>
<dbReference type="CDD" id="cd00427">
    <property type="entry name" value="Ribosomal_L29_HIP"/>
    <property type="match status" value="1"/>
</dbReference>
<dbReference type="FunFam" id="1.10.287.310:FF:000005">
    <property type="entry name" value="50S ribosomal protein L29"/>
    <property type="match status" value="1"/>
</dbReference>
<dbReference type="Gene3D" id="1.10.287.310">
    <property type="match status" value="1"/>
</dbReference>
<dbReference type="HAMAP" id="MF_00374">
    <property type="entry name" value="Ribosomal_uL29"/>
    <property type="match status" value="1"/>
</dbReference>
<dbReference type="InterPro" id="IPR050063">
    <property type="entry name" value="Ribosomal_protein_uL29"/>
</dbReference>
<dbReference type="InterPro" id="IPR001854">
    <property type="entry name" value="Ribosomal_uL29"/>
</dbReference>
<dbReference type="InterPro" id="IPR018254">
    <property type="entry name" value="Ribosomal_uL29_CS"/>
</dbReference>
<dbReference type="InterPro" id="IPR036049">
    <property type="entry name" value="Ribosomal_uL29_sf"/>
</dbReference>
<dbReference type="NCBIfam" id="TIGR00012">
    <property type="entry name" value="L29"/>
    <property type="match status" value="1"/>
</dbReference>
<dbReference type="PANTHER" id="PTHR10916">
    <property type="entry name" value="60S RIBOSOMAL PROTEIN L35/50S RIBOSOMAL PROTEIN L29"/>
    <property type="match status" value="1"/>
</dbReference>
<dbReference type="PANTHER" id="PTHR10916:SF0">
    <property type="entry name" value="LARGE RIBOSOMAL SUBUNIT PROTEIN UL29C"/>
    <property type="match status" value="1"/>
</dbReference>
<dbReference type="Pfam" id="PF00831">
    <property type="entry name" value="Ribosomal_L29"/>
    <property type="match status" value="1"/>
</dbReference>
<dbReference type="SUPFAM" id="SSF46561">
    <property type="entry name" value="Ribosomal protein L29 (L29p)"/>
    <property type="match status" value="1"/>
</dbReference>
<dbReference type="PROSITE" id="PS00579">
    <property type="entry name" value="RIBOSOMAL_L29"/>
    <property type="match status" value="1"/>
</dbReference>
<name>RL29_RHOPT</name>
<evidence type="ECO:0000255" key="1">
    <source>
        <dbReference type="HAMAP-Rule" id="MF_00374"/>
    </source>
</evidence>
<evidence type="ECO:0000305" key="2"/>